<comment type="function">
    <text evidence="1 4 5">May modulate immune response and may play a role in inflammation (PubMed:36649229). Down-modulates STAT3 signaling throught direct interaction with IL6ST, resulting in the inhibition of phosphorylation of STAT3 at 'Tyr-705' (PubMed:26927669). May negatively regulates AKT signaling by modulating the activity of mTORC2 complex through RICTOR interaction (By similarity).</text>
</comment>
<comment type="subunit">
    <text evidence="1 4">Interacts with IL6ST; this interaction prevents IL6ST protein homodimerization and bridges ARMH4 with IL6R and STAT3 and therefore inhibits phosphorylation of STAT3 at 'Tyr-705' (PubMed:26927669). Interacts (via cytoplasmic tail) with RICTOR; this interaction bridges ARMH4 to the mTORC2 complex and inhibits the mTORC2 kinase activity (By similarity).</text>
</comment>
<comment type="interaction">
    <interactant intactId="EBI-21494833">
        <id>Q86TY3</id>
    </interactant>
    <interactant intactId="EBI-27012657">
        <id>A8MWY0</id>
        <label>ELAPOR2</label>
    </interactant>
    <organismsDiffer>false</organismsDiffer>
    <experiments>2</experiments>
</comment>
<comment type="subcellular location">
    <subcellularLocation>
        <location evidence="5">Membrane</location>
        <topology evidence="8">Single-pass type I membrane protein</topology>
    </subcellularLocation>
</comment>
<comment type="alternative products">
    <event type="alternative splicing"/>
    <isoform>
        <id>Q86TY3-1</id>
        <name>1</name>
        <sequence type="displayed"/>
    </isoform>
    <isoform>
        <id>Q86TY3-2</id>
        <name>2</name>
        <sequence type="described" ref="VSP_020882 VSP_020883"/>
    </isoform>
    <isoform>
        <id>Q86TY3-3</id>
        <name>3</name>
        <sequence type="described" ref="VSP_020881"/>
    </isoform>
</comment>
<comment type="tissue specificity">
    <text evidence="5">Expressed in podocytes.</text>
</comment>
<feature type="signal peptide" evidence="2">
    <location>
        <begin position="1"/>
        <end position="27"/>
    </location>
</feature>
<feature type="chain" id="PRO_0000252152" description="Armadillo-like helical domain-containing protein 4">
    <location>
        <begin position="28"/>
        <end position="774"/>
    </location>
</feature>
<feature type="topological domain" description="Extracellular" evidence="2">
    <location>
        <begin position="28"/>
        <end position="714"/>
    </location>
</feature>
<feature type="transmembrane region" description="Helical" evidence="2">
    <location>
        <begin position="715"/>
        <end position="735"/>
    </location>
</feature>
<feature type="topological domain" description="Cytoplasmic" evidence="2">
    <location>
        <begin position="736"/>
        <end position="774"/>
    </location>
</feature>
<feature type="region of interest" description="Disordered" evidence="3">
    <location>
        <begin position="41"/>
        <end position="63"/>
    </location>
</feature>
<feature type="region of interest" description="Disordered" evidence="3">
    <location>
        <begin position="97"/>
        <end position="135"/>
    </location>
</feature>
<feature type="region of interest" description="Disordered" evidence="3">
    <location>
        <begin position="221"/>
        <end position="275"/>
    </location>
</feature>
<feature type="region of interest" description="Disordered" evidence="3">
    <location>
        <begin position="600"/>
        <end position="669"/>
    </location>
</feature>
<feature type="compositionally biased region" description="Basic and acidic residues" evidence="3">
    <location>
        <begin position="41"/>
        <end position="52"/>
    </location>
</feature>
<feature type="compositionally biased region" description="Basic and acidic residues" evidence="3">
    <location>
        <begin position="221"/>
        <end position="233"/>
    </location>
</feature>
<feature type="compositionally biased region" description="Polar residues" evidence="3">
    <location>
        <begin position="258"/>
        <end position="275"/>
    </location>
</feature>
<feature type="compositionally biased region" description="Acidic residues" evidence="3">
    <location>
        <begin position="607"/>
        <end position="651"/>
    </location>
</feature>
<feature type="modified residue" description="Phosphoserine" evidence="11">
    <location>
        <position position="769"/>
    </location>
</feature>
<feature type="modified residue" description="Phosphoserine" evidence="11">
    <location>
        <position position="770"/>
    </location>
</feature>
<feature type="glycosylation site" description="N-linked (GlcNAc...) asparagine" evidence="2">
    <location>
        <position position="57"/>
    </location>
</feature>
<feature type="glycosylation site" description="N-linked (GlcNAc...) asparagine" evidence="2">
    <location>
        <position position="189"/>
    </location>
</feature>
<feature type="splice variant" id="VSP_020881" description="In isoform 3." evidence="6">
    <location>
        <begin position="1"/>
        <end position="542"/>
    </location>
</feature>
<feature type="splice variant" id="VSP_020882" description="In isoform 2." evidence="7">
    <original>GQEDEDEEDEEDEDEEEEDEEEDEEDKDADSLDEGLDGDTELPGFTLPGITSQEPGLEE</original>
    <variation>TGFHHVAQARLKLLGLRSLPASASQSVGITSVNSCTQPRKYLNSCLKWKLNPKHFATGV</variation>
    <location>
        <begin position="612"/>
        <end position="670"/>
    </location>
</feature>
<feature type="splice variant" id="VSP_020883" description="In isoform 2." evidence="7">
    <location>
        <begin position="671"/>
        <end position="774"/>
    </location>
</feature>
<feature type="sequence variant" id="VAR_027782" description="In dbSNP:rs3829765.">
    <original>T</original>
    <variation>I</variation>
    <location>
        <position position="96"/>
    </location>
</feature>
<feature type="sequence variant" id="VAR_027783" description="In dbSNP:rs1018504.">
    <original>A</original>
    <variation>V</variation>
    <location>
        <position position="391"/>
    </location>
</feature>
<feature type="sequence variant" id="VAR_027784" description="In dbSNP:rs12886921.">
    <original>V</original>
    <variation>F</variation>
    <location>
        <position position="528"/>
    </location>
</feature>
<feature type="sequence variant" id="VAR_027785" description="In dbSNP:rs2273442.">
    <original>Q</original>
    <variation>E</variation>
    <location>
        <position position="613"/>
    </location>
</feature>
<feature type="sequence conflict" description="In Ref. 4; AAH62772." evidence="8" ref="4">
    <location>
        <position position="753"/>
    </location>
</feature>
<organism>
    <name type="scientific">Homo sapiens</name>
    <name type="common">Human</name>
    <dbReference type="NCBI Taxonomy" id="9606"/>
    <lineage>
        <taxon>Eukaryota</taxon>
        <taxon>Metazoa</taxon>
        <taxon>Chordata</taxon>
        <taxon>Craniata</taxon>
        <taxon>Vertebrata</taxon>
        <taxon>Euteleostomi</taxon>
        <taxon>Mammalia</taxon>
        <taxon>Eutheria</taxon>
        <taxon>Euarchontoglires</taxon>
        <taxon>Primates</taxon>
        <taxon>Haplorrhini</taxon>
        <taxon>Catarrhini</taxon>
        <taxon>Hominidae</taxon>
        <taxon>Homo</taxon>
    </lineage>
</organism>
<accession>Q86TY3</accession>
<accession>A8K8Z8</accession>
<accession>Q6P5Q1</accession>
<accession>Q86TY1</accession>
<dbReference type="EMBL" id="BX161411">
    <property type="protein sequence ID" value="CAD61887.1"/>
    <property type="molecule type" value="mRNA"/>
</dbReference>
<dbReference type="EMBL" id="BX161448">
    <property type="protein sequence ID" value="CAD61913.1"/>
    <property type="molecule type" value="mRNA"/>
</dbReference>
<dbReference type="EMBL" id="AK292513">
    <property type="protein sequence ID" value="BAF85202.1"/>
    <property type="molecule type" value="mRNA"/>
</dbReference>
<dbReference type="EMBL" id="CH471061">
    <property type="protein sequence ID" value="EAW80713.1"/>
    <property type="molecule type" value="Genomic_DNA"/>
</dbReference>
<dbReference type="EMBL" id="BC062772">
    <property type="protein sequence ID" value="AAH62772.1"/>
    <property type="molecule type" value="mRNA"/>
</dbReference>
<dbReference type="CCDS" id="CCDS32089.1">
    <molecule id="Q86TY3-1"/>
</dbReference>
<dbReference type="RefSeq" id="NP_001001872.2">
    <molecule id="Q86TY3-1"/>
    <property type="nucleotide sequence ID" value="NM_001001872.4"/>
</dbReference>
<dbReference type="RefSeq" id="NP_001307102.1">
    <molecule id="Q86TY3-2"/>
    <property type="nucleotide sequence ID" value="NM_001320173.3"/>
</dbReference>
<dbReference type="RefSeq" id="XP_016876518.1">
    <property type="nucleotide sequence ID" value="XM_017021029.1"/>
</dbReference>
<dbReference type="BioGRID" id="126910">
    <property type="interactions" value="21"/>
</dbReference>
<dbReference type="FunCoup" id="Q86TY3">
    <property type="interactions" value="87"/>
</dbReference>
<dbReference type="IntAct" id="Q86TY3">
    <property type="interactions" value="7"/>
</dbReference>
<dbReference type="STRING" id="9606.ENSP00000267485"/>
<dbReference type="GlyCosmos" id="Q86TY3">
    <property type="glycosylation" value="21 sites, 3 glycans"/>
</dbReference>
<dbReference type="GlyGen" id="Q86TY3">
    <property type="glycosylation" value="27 sites, 4 O-linked glycans (24 sites)"/>
</dbReference>
<dbReference type="iPTMnet" id="Q86TY3"/>
<dbReference type="PhosphoSitePlus" id="Q86TY3"/>
<dbReference type="BioMuta" id="C14orf37"/>
<dbReference type="DMDM" id="74750397"/>
<dbReference type="jPOST" id="Q86TY3"/>
<dbReference type="MassIVE" id="Q86TY3"/>
<dbReference type="PaxDb" id="9606-ENSP00000267485"/>
<dbReference type="PeptideAtlas" id="Q86TY3"/>
<dbReference type="ProteomicsDB" id="69744">
    <molecule id="Q86TY3-1"/>
</dbReference>
<dbReference type="ProteomicsDB" id="69745">
    <molecule id="Q86TY3-2"/>
</dbReference>
<dbReference type="ProteomicsDB" id="69746">
    <molecule id="Q86TY3-3"/>
</dbReference>
<dbReference type="Antibodypedia" id="77">
    <property type="antibodies" value="37 antibodies from 15 providers"/>
</dbReference>
<dbReference type="DNASU" id="145407"/>
<dbReference type="Ensembl" id="ENST00000267485.7">
    <molecule id="Q86TY3-1"/>
    <property type="protein sequence ID" value="ENSP00000267485.7"/>
    <property type="gene ID" value="ENSG00000139971.15"/>
</dbReference>
<dbReference type="GeneID" id="145407"/>
<dbReference type="KEGG" id="hsa:145407"/>
<dbReference type="MANE-Select" id="ENST00000267485.7">
    <property type="protein sequence ID" value="ENSP00000267485.7"/>
    <property type="RefSeq nucleotide sequence ID" value="NM_001001872.4"/>
    <property type="RefSeq protein sequence ID" value="NP_001001872.2"/>
</dbReference>
<dbReference type="UCSC" id="uc001xdc.4">
    <molecule id="Q86TY3-1"/>
    <property type="organism name" value="human"/>
</dbReference>
<dbReference type="AGR" id="HGNC:19846"/>
<dbReference type="CTD" id="145407"/>
<dbReference type="DisGeNET" id="145407"/>
<dbReference type="GeneCards" id="ARMH4"/>
<dbReference type="HGNC" id="HGNC:19846">
    <property type="gene designation" value="ARMH4"/>
</dbReference>
<dbReference type="HPA" id="ENSG00000139971">
    <property type="expression patterns" value="Tissue enhanced (kidney)"/>
</dbReference>
<dbReference type="neXtProt" id="NX_Q86TY3"/>
<dbReference type="OpenTargets" id="ENSG00000139971"/>
<dbReference type="PharmGKB" id="PA134941886"/>
<dbReference type="VEuPathDB" id="HostDB:ENSG00000139971"/>
<dbReference type="eggNOG" id="ENOG502QWJQ">
    <property type="taxonomic scope" value="Eukaryota"/>
</dbReference>
<dbReference type="GeneTree" id="ENSGT00390000012816"/>
<dbReference type="HOGENOM" id="CLU_021688_0_0_1"/>
<dbReference type="InParanoid" id="Q86TY3"/>
<dbReference type="OMA" id="DVNTKEM"/>
<dbReference type="OrthoDB" id="9904542at2759"/>
<dbReference type="PAN-GO" id="Q86TY3">
    <property type="GO annotations" value="0 GO annotations based on evolutionary models"/>
</dbReference>
<dbReference type="PhylomeDB" id="Q86TY3"/>
<dbReference type="TreeFam" id="TF336099"/>
<dbReference type="PathwayCommons" id="Q86TY3"/>
<dbReference type="SignaLink" id="Q86TY3"/>
<dbReference type="BioGRID-ORCS" id="145407">
    <property type="hits" value="6 hits in 1126 CRISPR screens"/>
</dbReference>
<dbReference type="ChiTaRS" id="C14orf37">
    <property type="organism name" value="human"/>
</dbReference>
<dbReference type="GenomeRNAi" id="145407"/>
<dbReference type="Pharos" id="Q86TY3">
    <property type="development level" value="Tdark"/>
</dbReference>
<dbReference type="PRO" id="PR:Q86TY3"/>
<dbReference type="Proteomes" id="UP000005640">
    <property type="component" value="Chromosome 14"/>
</dbReference>
<dbReference type="RNAct" id="Q86TY3">
    <property type="molecule type" value="protein"/>
</dbReference>
<dbReference type="Bgee" id="ENSG00000139971">
    <property type="expression patterns" value="Expressed in cortical plate and 135 other cell types or tissues"/>
</dbReference>
<dbReference type="ExpressionAtlas" id="Q86TY3">
    <property type="expression patterns" value="baseline and differential"/>
</dbReference>
<dbReference type="GO" id="GO:0016020">
    <property type="term" value="C:membrane"/>
    <property type="evidence" value="ECO:0000314"/>
    <property type="project" value="UniProtKB"/>
</dbReference>
<dbReference type="GO" id="GO:1904841">
    <property type="term" value="F:TORC2 complex binding"/>
    <property type="evidence" value="ECO:0000250"/>
    <property type="project" value="UniProtKB"/>
</dbReference>
<dbReference type="GO" id="GO:0050727">
    <property type="term" value="P:regulation of inflammatory response"/>
    <property type="evidence" value="ECO:0000314"/>
    <property type="project" value="UniProtKB"/>
</dbReference>
<dbReference type="GO" id="GO:1903939">
    <property type="term" value="P:regulation of TORC2 signaling"/>
    <property type="evidence" value="ECO:0000250"/>
    <property type="project" value="UniProtKB"/>
</dbReference>
<dbReference type="InterPro" id="IPR031524">
    <property type="entry name" value="ARMH4"/>
</dbReference>
<dbReference type="PANTHER" id="PTHR21585:SF0">
    <property type="entry name" value="ARMADILLO-LIKE HELICAL DOMAIN-CONTAINING PROTEIN 4"/>
    <property type="match status" value="1"/>
</dbReference>
<dbReference type="PANTHER" id="PTHR21585">
    <property type="entry name" value="FULL-LENGTH CDNA CLONE CS0DC025YL05 OF NEUROBLASTOMA"/>
    <property type="match status" value="1"/>
</dbReference>
<dbReference type="Pfam" id="PF15767">
    <property type="entry name" value="ARMH4"/>
    <property type="match status" value="1"/>
</dbReference>
<gene>
    <name evidence="10" type="primary">ARMH4</name>
    <name evidence="10" type="synonym">C14orf37</name>
</gene>
<evidence type="ECO:0000250" key="1">
    <source>
        <dbReference type="UniProtKB" id="Q8BT18"/>
    </source>
</evidence>
<evidence type="ECO:0000255" key="2"/>
<evidence type="ECO:0000256" key="3">
    <source>
        <dbReference type="SAM" id="MobiDB-lite"/>
    </source>
</evidence>
<evidence type="ECO:0000269" key="4">
    <source>
    </source>
</evidence>
<evidence type="ECO:0000269" key="5">
    <source>
    </source>
</evidence>
<evidence type="ECO:0000303" key="6">
    <source>
    </source>
</evidence>
<evidence type="ECO:0000303" key="7">
    <source ref="1"/>
</evidence>
<evidence type="ECO:0000305" key="8"/>
<evidence type="ECO:0000305" key="9">
    <source>
    </source>
</evidence>
<evidence type="ECO:0000312" key="10">
    <source>
        <dbReference type="HGNC" id="HGNC:19846"/>
    </source>
</evidence>
<evidence type="ECO:0007744" key="11">
    <source>
    </source>
</evidence>
<name>ARMD4_HUMAN</name>
<keyword id="KW-0025">Alternative splicing</keyword>
<keyword id="KW-0325">Glycoprotein</keyword>
<keyword id="KW-0472">Membrane</keyword>
<keyword id="KW-0597">Phosphoprotein</keyword>
<keyword id="KW-1267">Proteomics identification</keyword>
<keyword id="KW-1185">Reference proteome</keyword>
<keyword id="KW-0732">Signal</keyword>
<keyword id="KW-0812">Transmembrane</keyword>
<keyword id="KW-1133">Transmembrane helix</keyword>
<proteinExistence type="evidence at protein level"/>
<sequence>MRGPIVLHICLAFCSLLLFSVATQCLAFPKIERRREIAHVHAEKGQSDKMNTDDLENSSVTSKQTPQLVVSEDPMMMSAVPSATSLNKAFSINKETQPGQAGLMQTERPGVSTPTESGVPSAEEVFGSSQPERISPESGLAKAMLTIAITATPSLTVDEKEELLTSTNFQPIVEEITETTKGFLKYMDNQSFATESQEGVGLGHSPSSYVNTKEMLTTNPKTEKFEADTDHRTTSFPGAESTAGSEPGSLTPDKEKPSQMTADNTQAAATKQPLETSEYTLSVEPETDSLLGAPEVTVSVSTAVPAASALSDEWDDTKLESVSRIRTPKLGDNEETQVRTEMSQTAQVSHEGMEGGQPWTEAAQVALGLPEGETHTGTALLIAHGNERSPAFTDQSSFTPTSLMEDMKVSIVNLLQSTGDFTESTKENDALFFLETTVSVSVYESEADQLLGNTMKDIITQEMTTAVQEPDATLSMVTQEQVATLELIRDSGKTEEEKEDPSPVSDVPGVTQLSRRWEPLATTISTTVVPLSFEVTPTVEEQMDTVTGPNEEFTPVLGSPVTPPGIMVGEPSISPALPALEASSERRTVVPSITRVNTAASYGLDQLESEEGQEDEDEEDEEDEDEEEEDEEEDEEDKDADSLDEGLDGDTELPGFTLPGITSQEPGLEEGNMDLLEGATYQVPDALEWEQQNQGLVRSWMEKLKDKAGYMSGMLVPVGVGIAGALFILGALYSIKVMNRRRRNGFKRHKRKQREFNSMQDRVMLLADSSEDEF</sequence>
<protein>
    <recommendedName>
        <fullName evidence="8">Armadillo-like helical domain-containing protein 4</fullName>
    </recommendedName>
    <alternativeName>
        <fullName evidence="9">Upstream of mTORC2 protein</fullName>
    </alternativeName>
</protein>
<reference key="1">
    <citation type="submission" date="2003-01" db="EMBL/GenBank/DDBJ databases">
        <title>Full-length cDNA libraries and normalization.</title>
        <authorList>
            <person name="Li W.B."/>
            <person name="Gruber C."/>
            <person name="Jessee J."/>
            <person name="Polayes D."/>
        </authorList>
    </citation>
    <scope>NUCLEOTIDE SEQUENCE [LARGE SCALE MRNA] (ISOFORMS 1 AND 2)</scope>
    <source>
        <tissue>Neuroblastoma</tissue>
        <tissue>Placenta</tissue>
    </source>
</reference>
<reference key="2">
    <citation type="journal article" date="2004" name="Nat. Genet.">
        <title>Complete sequencing and characterization of 21,243 full-length human cDNAs.</title>
        <authorList>
            <person name="Ota T."/>
            <person name="Suzuki Y."/>
            <person name="Nishikawa T."/>
            <person name="Otsuki T."/>
            <person name="Sugiyama T."/>
            <person name="Irie R."/>
            <person name="Wakamatsu A."/>
            <person name="Hayashi K."/>
            <person name="Sato H."/>
            <person name="Nagai K."/>
            <person name="Kimura K."/>
            <person name="Makita H."/>
            <person name="Sekine M."/>
            <person name="Obayashi M."/>
            <person name="Nishi T."/>
            <person name="Shibahara T."/>
            <person name="Tanaka T."/>
            <person name="Ishii S."/>
            <person name="Yamamoto J."/>
            <person name="Saito K."/>
            <person name="Kawai Y."/>
            <person name="Isono Y."/>
            <person name="Nakamura Y."/>
            <person name="Nagahari K."/>
            <person name="Murakami K."/>
            <person name="Yasuda T."/>
            <person name="Iwayanagi T."/>
            <person name="Wagatsuma M."/>
            <person name="Shiratori A."/>
            <person name="Sudo H."/>
            <person name="Hosoiri T."/>
            <person name="Kaku Y."/>
            <person name="Kodaira H."/>
            <person name="Kondo H."/>
            <person name="Sugawara M."/>
            <person name="Takahashi M."/>
            <person name="Kanda K."/>
            <person name="Yokoi T."/>
            <person name="Furuya T."/>
            <person name="Kikkawa E."/>
            <person name="Omura Y."/>
            <person name="Abe K."/>
            <person name="Kamihara K."/>
            <person name="Katsuta N."/>
            <person name="Sato K."/>
            <person name="Tanikawa M."/>
            <person name="Yamazaki M."/>
            <person name="Ninomiya K."/>
            <person name="Ishibashi T."/>
            <person name="Yamashita H."/>
            <person name="Murakawa K."/>
            <person name="Fujimori K."/>
            <person name="Tanai H."/>
            <person name="Kimata M."/>
            <person name="Watanabe M."/>
            <person name="Hiraoka S."/>
            <person name="Chiba Y."/>
            <person name="Ishida S."/>
            <person name="Ono Y."/>
            <person name="Takiguchi S."/>
            <person name="Watanabe S."/>
            <person name="Yosida M."/>
            <person name="Hotuta T."/>
            <person name="Kusano J."/>
            <person name="Kanehori K."/>
            <person name="Takahashi-Fujii A."/>
            <person name="Hara H."/>
            <person name="Tanase T.-O."/>
            <person name="Nomura Y."/>
            <person name="Togiya S."/>
            <person name="Komai F."/>
            <person name="Hara R."/>
            <person name="Takeuchi K."/>
            <person name="Arita M."/>
            <person name="Imose N."/>
            <person name="Musashino K."/>
            <person name="Yuuki H."/>
            <person name="Oshima A."/>
            <person name="Sasaki N."/>
            <person name="Aotsuka S."/>
            <person name="Yoshikawa Y."/>
            <person name="Matsunawa H."/>
            <person name="Ichihara T."/>
            <person name="Shiohata N."/>
            <person name="Sano S."/>
            <person name="Moriya S."/>
            <person name="Momiyama H."/>
            <person name="Satoh N."/>
            <person name="Takami S."/>
            <person name="Terashima Y."/>
            <person name="Suzuki O."/>
            <person name="Nakagawa S."/>
            <person name="Senoh A."/>
            <person name="Mizoguchi H."/>
            <person name="Goto Y."/>
            <person name="Shimizu F."/>
            <person name="Wakebe H."/>
            <person name="Hishigaki H."/>
            <person name="Watanabe T."/>
            <person name="Sugiyama A."/>
            <person name="Takemoto M."/>
            <person name="Kawakami B."/>
            <person name="Yamazaki M."/>
            <person name="Watanabe K."/>
            <person name="Kumagai A."/>
            <person name="Itakura S."/>
            <person name="Fukuzumi Y."/>
            <person name="Fujimori Y."/>
            <person name="Komiyama M."/>
            <person name="Tashiro H."/>
            <person name="Tanigami A."/>
            <person name="Fujiwara T."/>
            <person name="Ono T."/>
            <person name="Yamada K."/>
            <person name="Fujii Y."/>
            <person name="Ozaki K."/>
            <person name="Hirao M."/>
            <person name="Ohmori Y."/>
            <person name="Kawabata A."/>
            <person name="Hikiji T."/>
            <person name="Kobatake N."/>
            <person name="Inagaki H."/>
            <person name="Ikema Y."/>
            <person name="Okamoto S."/>
            <person name="Okitani R."/>
            <person name="Kawakami T."/>
            <person name="Noguchi S."/>
            <person name="Itoh T."/>
            <person name="Shigeta K."/>
            <person name="Senba T."/>
            <person name="Matsumura K."/>
            <person name="Nakajima Y."/>
            <person name="Mizuno T."/>
            <person name="Morinaga M."/>
            <person name="Sasaki M."/>
            <person name="Togashi T."/>
            <person name="Oyama M."/>
            <person name="Hata H."/>
            <person name="Watanabe M."/>
            <person name="Komatsu T."/>
            <person name="Mizushima-Sugano J."/>
            <person name="Satoh T."/>
            <person name="Shirai Y."/>
            <person name="Takahashi Y."/>
            <person name="Nakagawa K."/>
            <person name="Okumura K."/>
            <person name="Nagase T."/>
            <person name="Nomura N."/>
            <person name="Kikuchi H."/>
            <person name="Masuho Y."/>
            <person name="Yamashita R."/>
            <person name="Nakai K."/>
            <person name="Yada T."/>
            <person name="Nakamura Y."/>
            <person name="Ohara O."/>
            <person name="Isogai T."/>
            <person name="Sugano S."/>
        </authorList>
    </citation>
    <scope>NUCLEOTIDE SEQUENCE [LARGE SCALE MRNA] (ISOFORM 1)</scope>
    <source>
        <tissue>Testis</tissue>
    </source>
</reference>
<reference key="3">
    <citation type="submission" date="2005-07" db="EMBL/GenBank/DDBJ databases">
        <authorList>
            <person name="Mural R.J."/>
            <person name="Istrail S."/>
            <person name="Sutton G.G."/>
            <person name="Florea L."/>
            <person name="Halpern A.L."/>
            <person name="Mobarry C.M."/>
            <person name="Lippert R."/>
            <person name="Walenz B."/>
            <person name="Shatkay H."/>
            <person name="Dew I."/>
            <person name="Miller J.R."/>
            <person name="Flanigan M.J."/>
            <person name="Edwards N.J."/>
            <person name="Bolanos R."/>
            <person name="Fasulo D."/>
            <person name="Halldorsson B.V."/>
            <person name="Hannenhalli S."/>
            <person name="Turner R."/>
            <person name="Yooseph S."/>
            <person name="Lu F."/>
            <person name="Nusskern D.R."/>
            <person name="Shue B.C."/>
            <person name="Zheng X.H."/>
            <person name="Zhong F."/>
            <person name="Delcher A.L."/>
            <person name="Huson D.H."/>
            <person name="Kravitz S.A."/>
            <person name="Mouchard L."/>
            <person name="Reinert K."/>
            <person name="Remington K.A."/>
            <person name="Clark A.G."/>
            <person name="Waterman M.S."/>
            <person name="Eichler E.E."/>
            <person name="Adams M.D."/>
            <person name="Hunkapiller M.W."/>
            <person name="Myers E.W."/>
            <person name="Venter J.C."/>
        </authorList>
    </citation>
    <scope>NUCLEOTIDE SEQUENCE [LARGE SCALE GENOMIC DNA]</scope>
</reference>
<reference key="4">
    <citation type="journal article" date="2004" name="Genome Res.">
        <title>The status, quality, and expansion of the NIH full-length cDNA project: the Mammalian Gene Collection (MGC).</title>
        <authorList>
            <consortium name="The MGC Project Team"/>
        </authorList>
    </citation>
    <scope>NUCLEOTIDE SEQUENCE [LARGE SCALE MRNA] (ISOFORM 3)</scope>
    <source>
        <tissue>Kidney</tissue>
    </source>
</reference>
<reference key="5">
    <citation type="journal article" date="2011" name="Sci. Signal.">
        <title>System-wide temporal characterization of the proteome and phosphoproteome of human embryonic stem cell differentiation.</title>
        <authorList>
            <person name="Rigbolt K.T."/>
            <person name="Prokhorova T.A."/>
            <person name="Akimov V."/>
            <person name="Henningsen J."/>
            <person name="Johansen P.T."/>
            <person name="Kratchmarova I."/>
            <person name="Kassem M."/>
            <person name="Mann M."/>
            <person name="Olsen J.V."/>
            <person name="Blagoev B."/>
        </authorList>
    </citation>
    <scope>PHOSPHORYLATION [LARGE SCALE ANALYSIS] AT SER-769 AND SER-770</scope>
    <scope>IDENTIFICATION BY MASS SPECTROMETRY [LARGE SCALE ANALYSIS]</scope>
</reference>
<reference key="6">
    <citation type="journal article" date="2023" name="PLoS ONE">
        <title>Identification of ARMH4 and WIPF3 as human podocyte proteins with potential roles in immunomodulation and cytoskeletal dynamics.</title>
        <authorList>
            <person name="De Luca F."/>
            <person name="Kha M."/>
            <person name="Swaerd K."/>
            <person name="Johansson M.E."/>
        </authorList>
    </citation>
    <scope>FUNCTION</scope>
    <scope>SUBCELLULAR LOCATION</scope>
    <scope>TISSUE SPECIFICITY</scope>
</reference>
<reference key="7">
    <citation type="journal article" date="2016" name="J. Clin. Invest.">
        <title>Endogenous transmembrane protein UT2 inhibits pSTAT3 and suppresses hematological malignancy.</title>
        <authorList>
            <person name="Lee D."/>
            <person name="Wang Y.H."/>
            <person name="Kalaitzidis D."/>
            <person name="Ramachandran J."/>
            <person name="Eda H."/>
            <person name="Sykes D.B."/>
            <person name="Raje N."/>
            <person name="Scadden D.T."/>
        </authorList>
    </citation>
    <scope>FUNCTION</scope>
    <scope>INTERACTION WITH IL6ST</scope>
</reference>